<accession>Q0HGW1</accession>
<feature type="chain" id="PRO_1000020311" description="1-deoxy-D-xylulose 5-phosphate reductoisomerase">
    <location>
        <begin position="1"/>
        <end position="396"/>
    </location>
</feature>
<feature type="binding site" evidence="1">
    <location>
        <position position="10"/>
    </location>
    <ligand>
        <name>NADPH</name>
        <dbReference type="ChEBI" id="CHEBI:57783"/>
    </ligand>
</feature>
<feature type="binding site" evidence="1">
    <location>
        <position position="11"/>
    </location>
    <ligand>
        <name>NADPH</name>
        <dbReference type="ChEBI" id="CHEBI:57783"/>
    </ligand>
</feature>
<feature type="binding site" evidence="1">
    <location>
        <position position="12"/>
    </location>
    <ligand>
        <name>NADPH</name>
        <dbReference type="ChEBI" id="CHEBI:57783"/>
    </ligand>
</feature>
<feature type="binding site" evidence="1">
    <location>
        <position position="13"/>
    </location>
    <ligand>
        <name>NADPH</name>
        <dbReference type="ChEBI" id="CHEBI:57783"/>
    </ligand>
</feature>
<feature type="binding site" evidence="1">
    <location>
        <position position="123"/>
    </location>
    <ligand>
        <name>NADPH</name>
        <dbReference type="ChEBI" id="CHEBI:57783"/>
    </ligand>
</feature>
<feature type="binding site" evidence="1">
    <location>
        <position position="124"/>
    </location>
    <ligand>
        <name>1-deoxy-D-xylulose 5-phosphate</name>
        <dbReference type="ChEBI" id="CHEBI:57792"/>
    </ligand>
</feature>
<feature type="binding site" evidence="1">
    <location>
        <position position="125"/>
    </location>
    <ligand>
        <name>NADPH</name>
        <dbReference type="ChEBI" id="CHEBI:57783"/>
    </ligand>
</feature>
<feature type="binding site" evidence="1">
    <location>
        <position position="149"/>
    </location>
    <ligand>
        <name>Mn(2+)</name>
        <dbReference type="ChEBI" id="CHEBI:29035"/>
    </ligand>
</feature>
<feature type="binding site" evidence="1">
    <location>
        <position position="150"/>
    </location>
    <ligand>
        <name>1-deoxy-D-xylulose 5-phosphate</name>
        <dbReference type="ChEBI" id="CHEBI:57792"/>
    </ligand>
</feature>
<feature type="binding site" evidence="1">
    <location>
        <position position="151"/>
    </location>
    <ligand>
        <name>1-deoxy-D-xylulose 5-phosphate</name>
        <dbReference type="ChEBI" id="CHEBI:57792"/>
    </ligand>
</feature>
<feature type="binding site" evidence="1">
    <location>
        <position position="151"/>
    </location>
    <ligand>
        <name>Mn(2+)</name>
        <dbReference type="ChEBI" id="CHEBI:29035"/>
    </ligand>
</feature>
<feature type="binding site" evidence="1">
    <location>
        <position position="185"/>
    </location>
    <ligand>
        <name>1-deoxy-D-xylulose 5-phosphate</name>
        <dbReference type="ChEBI" id="CHEBI:57792"/>
    </ligand>
</feature>
<feature type="binding site" evidence="1">
    <location>
        <position position="208"/>
    </location>
    <ligand>
        <name>1-deoxy-D-xylulose 5-phosphate</name>
        <dbReference type="ChEBI" id="CHEBI:57792"/>
    </ligand>
</feature>
<feature type="binding site" evidence="1">
    <location>
        <position position="214"/>
    </location>
    <ligand>
        <name>NADPH</name>
        <dbReference type="ChEBI" id="CHEBI:57783"/>
    </ligand>
</feature>
<feature type="binding site" evidence="1">
    <location>
        <position position="221"/>
    </location>
    <ligand>
        <name>1-deoxy-D-xylulose 5-phosphate</name>
        <dbReference type="ChEBI" id="CHEBI:57792"/>
    </ligand>
</feature>
<feature type="binding site" evidence="1">
    <location>
        <position position="226"/>
    </location>
    <ligand>
        <name>1-deoxy-D-xylulose 5-phosphate</name>
        <dbReference type="ChEBI" id="CHEBI:57792"/>
    </ligand>
</feature>
<feature type="binding site" evidence="1">
    <location>
        <position position="227"/>
    </location>
    <ligand>
        <name>1-deoxy-D-xylulose 5-phosphate</name>
        <dbReference type="ChEBI" id="CHEBI:57792"/>
    </ligand>
</feature>
<feature type="binding site" evidence="1">
    <location>
        <position position="230"/>
    </location>
    <ligand>
        <name>1-deoxy-D-xylulose 5-phosphate</name>
        <dbReference type="ChEBI" id="CHEBI:57792"/>
    </ligand>
</feature>
<feature type="binding site" evidence="1">
    <location>
        <position position="230"/>
    </location>
    <ligand>
        <name>Mn(2+)</name>
        <dbReference type="ChEBI" id="CHEBI:29035"/>
    </ligand>
</feature>
<comment type="function">
    <text evidence="1">Catalyzes the NADPH-dependent rearrangement and reduction of 1-deoxy-D-xylulose-5-phosphate (DXP) to 2-C-methyl-D-erythritol 4-phosphate (MEP).</text>
</comment>
<comment type="catalytic activity">
    <reaction evidence="1">
        <text>2-C-methyl-D-erythritol 4-phosphate + NADP(+) = 1-deoxy-D-xylulose 5-phosphate + NADPH + H(+)</text>
        <dbReference type="Rhea" id="RHEA:13717"/>
        <dbReference type="ChEBI" id="CHEBI:15378"/>
        <dbReference type="ChEBI" id="CHEBI:57783"/>
        <dbReference type="ChEBI" id="CHEBI:57792"/>
        <dbReference type="ChEBI" id="CHEBI:58262"/>
        <dbReference type="ChEBI" id="CHEBI:58349"/>
        <dbReference type="EC" id="1.1.1.267"/>
    </reaction>
    <physiologicalReaction direction="right-to-left" evidence="1">
        <dbReference type="Rhea" id="RHEA:13719"/>
    </physiologicalReaction>
</comment>
<comment type="cofactor">
    <cofactor evidence="1">
        <name>Mg(2+)</name>
        <dbReference type="ChEBI" id="CHEBI:18420"/>
    </cofactor>
    <cofactor evidence="1">
        <name>Mn(2+)</name>
        <dbReference type="ChEBI" id="CHEBI:29035"/>
    </cofactor>
</comment>
<comment type="pathway">
    <text evidence="1">Isoprenoid biosynthesis; isopentenyl diphosphate biosynthesis via DXP pathway; isopentenyl diphosphate from 1-deoxy-D-xylulose 5-phosphate: step 1/6.</text>
</comment>
<comment type="similarity">
    <text evidence="1">Belongs to the DXR family.</text>
</comment>
<proteinExistence type="inferred from homology"/>
<sequence length="396" mass="41966">MQNMVILGATGSIGASTLSVISANPDAYRVYALVANASVDKMLALCITHRPQVAHMVDSQAALALQAKLPPELNIQVSSGEDELIALVTATEVDTVMAAIVGAAGLVPTLAAVKAGKRVLLANKEALVMSGELFIEATKASGATLLPVDSEHNAIFQCLPEEVQANLGRCDLAASGISHILLTGSGGPFLTAELASLAAMTPAQACKHPNWSMGPKISVDSATMMNKGLEFIEARWLFNTQNDQLKVVIHPQSVIHSMVQYRDGSVIAQMGNPDMRTPIAHCMSYPQRISSGVEPLDFFKVGQLSFCEPDFNRFPCLALAIAACAQGQEATTVLNAANEIAVEAFLQGQIGFTHIAKVNEACLSSVPKRAMTSIDDIIALDAQTRIYAREQLAKLA</sequence>
<protein>
    <recommendedName>
        <fullName evidence="1">1-deoxy-D-xylulose 5-phosphate reductoisomerase</fullName>
        <shortName evidence="1">DXP reductoisomerase</shortName>
        <ecNumber evidence="1">1.1.1.267</ecNumber>
    </recommendedName>
    <alternativeName>
        <fullName evidence="1">1-deoxyxylulose-5-phosphate reductoisomerase</fullName>
    </alternativeName>
    <alternativeName>
        <fullName evidence="1">2-C-methyl-D-erythritol 4-phosphate synthase</fullName>
    </alternativeName>
</protein>
<reference key="1">
    <citation type="submission" date="2006-08" db="EMBL/GenBank/DDBJ databases">
        <title>Complete sequence of Shewanella sp. MR-4.</title>
        <authorList>
            <consortium name="US DOE Joint Genome Institute"/>
            <person name="Copeland A."/>
            <person name="Lucas S."/>
            <person name="Lapidus A."/>
            <person name="Barry K."/>
            <person name="Detter J.C."/>
            <person name="Glavina del Rio T."/>
            <person name="Hammon N."/>
            <person name="Israni S."/>
            <person name="Dalin E."/>
            <person name="Tice H."/>
            <person name="Pitluck S."/>
            <person name="Kiss H."/>
            <person name="Brettin T."/>
            <person name="Bruce D."/>
            <person name="Han C."/>
            <person name="Tapia R."/>
            <person name="Gilna P."/>
            <person name="Schmutz J."/>
            <person name="Larimer F."/>
            <person name="Land M."/>
            <person name="Hauser L."/>
            <person name="Kyrpides N."/>
            <person name="Mikhailova N."/>
            <person name="Nealson K."/>
            <person name="Konstantinidis K."/>
            <person name="Klappenbach J."/>
            <person name="Tiedje J."/>
            <person name="Richardson P."/>
        </authorList>
    </citation>
    <scope>NUCLEOTIDE SEQUENCE [LARGE SCALE GENOMIC DNA]</scope>
    <source>
        <strain>MR-4</strain>
    </source>
</reference>
<name>DXR_SHESM</name>
<organism>
    <name type="scientific">Shewanella sp. (strain MR-4)</name>
    <dbReference type="NCBI Taxonomy" id="60480"/>
    <lineage>
        <taxon>Bacteria</taxon>
        <taxon>Pseudomonadati</taxon>
        <taxon>Pseudomonadota</taxon>
        <taxon>Gammaproteobacteria</taxon>
        <taxon>Alteromonadales</taxon>
        <taxon>Shewanellaceae</taxon>
        <taxon>Shewanella</taxon>
    </lineage>
</organism>
<keyword id="KW-0414">Isoprene biosynthesis</keyword>
<keyword id="KW-0464">Manganese</keyword>
<keyword id="KW-0479">Metal-binding</keyword>
<keyword id="KW-0521">NADP</keyword>
<keyword id="KW-0560">Oxidoreductase</keyword>
<evidence type="ECO:0000255" key="1">
    <source>
        <dbReference type="HAMAP-Rule" id="MF_00183"/>
    </source>
</evidence>
<dbReference type="EC" id="1.1.1.267" evidence="1"/>
<dbReference type="EMBL" id="CP000446">
    <property type="protein sequence ID" value="ABI39706.1"/>
    <property type="molecule type" value="Genomic_DNA"/>
</dbReference>
<dbReference type="RefSeq" id="WP_011623387.1">
    <property type="nucleotide sequence ID" value="NC_008321.1"/>
</dbReference>
<dbReference type="SMR" id="Q0HGW1"/>
<dbReference type="KEGG" id="she:Shewmr4_2635"/>
<dbReference type="HOGENOM" id="CLU_035714_4_0_6"/>
<dbReference type="UniPathway" id="UPA00056">
    <property type="reaction ID" value="UER00092"/>
</dbReference>
<dbReference type="GO" id="GO:0030604">
    <property type="term" value="F:1-deoxy-D-xylulose-5-phosphate reductoisomerase activity"/>
    <property type="evidence" value="ECO:0007669"/>
    <property type="project" value="UniProtKB-UniRule"/>
</dbReference>
<dbReference type="GO" id="GO:0030145">
    <property type="term" value="F:manganese ion binding"/>
    <property type="evidence" value="ECO:0007669"/>
    <property type="project" value="TreeGrafter"/>
</dbReference>
<dbReference type="GO" id="GO:0070402">
    <property type="term" value="F:NADPH binding"/>
    <property type="evidence" value="ECO:0007669"/>
    <property type="project" value="InterPro"/>
</dbReference>
<dbReference type="GO" id="GO:0051484">
    <property type="term" value="P:isopentenyl diphosphate biosynthetic process, methylerythritol 4-phosphate pathway involved in terpenoid biosynthetic process"/>
    <property type="evidence" value="ECO:0007669"/>
    <property type="project" value="TreeGrafter"/>
</dbReference>
<dbReference type="FunFam" id="1.10.1740.10:FF:000004">
    <property type="entry name" value="1-deoxy-D-xylulose 5-phosphate reductoisomerase"/>
    <property type="match status" value="1"/>
</dbReference>
<dbReference type="FunFam" id="3.40.50.720:FF:000045">
    <property type="entry name" value="1-deoxy-D-xylulose 5-phosphate reductoisomerase"/>
    <property type="match status" value="1"/>
</dbReference>
<dbReference type="Gene3D" id="1.10.1740.10">
    <property type="match status" value="1"/>
</dbReference>
<dbReference type="Gene3D" id="3.40.50.720">
    <property type="entry name" value="NAD(P)-binding Rossmann-like Domain"/>
    <property type="match status" value="1"/>
</dbReference>
<dbReference type="HAMAP" id="MF_00183">
    <property type="entry name" value="DXP_reductoisom"/>
    <property type="match status" value="1"/>
</dbReference>
<dbReference type="InterPro" id="IPR003821">
    <property type="entry name" value="DXP_reductoisomerase"/>
</dbReference>
<dbReference type="InterPro" id="IPR013644">
    <property type="entry name" value="DXP_reductoisomerase_C"/>
</dbReference>
<dbReference type="InterPro" id="IPR013512">
    <property type="entry name" value="DXP_reductoisomerase_N"/>
</dbReference>
<dbReference type="InterPro" id="IPR026877">
    <property type="entry name" value="DXPR_C"/>
</dbReference>
<dbReference type="InterPro" id="IPR036169">
    <property type="entry name" value="DXPR_C_sf"/>
</dbReference>
<dbReference type="InterPro" id="IPR036291">
    <property type="entry name" value="NAD(P)-bd_dom_sf"/>
</dbReference>
<dbReference type="NCBIfam" id="TIGR00243">
    <property type="entry name" value="Dxr"/>
    <property type="match status" value="1"/>
</dbReference>
<dbReference type="NCBIfam" id="NF003938">
    <property type="entry name" value="PRK05447.1-1"/>
    <property type="match status" value="1"/>
</dbReference>
<dbReference type="NCBIfam" id="NF009114">
    <property type="entry name" value="PRK12464.1"/>
    <property type="match status" value="1"/>
</dbReference>
<dbReference type="PANTHER" id="PTHR30525">
    <property type="entry name" value="1-DEOXY-D-XYLULOSE 5-PHOSPHATE REDUCTOISOMERASE"/>
    <property type="match status" value="1"/>
</dbReference>
<dbReference type="PANTHER" id="PTHR30525:SF0">
    <property type="entry name" value="1-DEOXY-D-XYLULOSE 5-PHOSPHATE REDUCTOISOMERASE, CHLOROPLASTIC"/>
    <property type="match status" value="1"/>
</dbReference>
<dbReference type="Pfam" id="PF08436">
    <property type="entry name" value="DXP_redisom_C"/>
    <property type="match status" value="1"/>
</dbReference>
<dbReference type="Pfam" id="PF02670">
    <property type="entry name" value="DXP_reductoisom"/>
    <property type="match status" value="1"/>
</dbReference>
<dbReference type="Pfam" id="PF13288">
    <property type="entry name" value="DXPR_C"/>
    <property type="match status" value="1"/>
</dbReference>
<dbReference type="PIRSF" id="PIRSF006205">
    <property type="entry name" value="Dxp_reductismrs"/>
    <property type="match status" value="1"/>
</dbReference>
<dbReference type="SUPFAM" id="SSF69055">
    <property type="entry name" value="1-deoxy-D-xylulose-5-phosphate reductoisomerase, C-terminal domain"/>
    <property type="match status" value="1"/>
</dbReference>
<dbReference type="SUPFAM" id="SSF55347">
    <property type="entry name" value="Glyceraldehyde-3-phosphate dehydrogenase-like, C-terminal domain"/>
    <property type="match status" value="1"/>
</dbReference>
<dbReference type="SUPFAM" id="SSF51735">
    <property type="entry name" value="NAD(P)-binding Rossmann-fold domains"/>
    <property type="match status" value="1"/>
</dbReference>
<gene>
    <name evidence="1" type="primary">dxr</name>
    <name type="ordered locus">Shewmr4_2635</name>
</gene>